<feature type="signal peptide" evidence="2">
    <location>
        <begin position="1"/>
        <end position="19"/>
    </location>
</feature>
<feature type="chain" id="PRO_0000001701" description="Therostasin">
    <location>
        <begin position="20"/>
        <end position="101"/>
    </location>
</feature>
<feature type="domain" description="Antistasin-like 1" evidence="1">
    <location>
        <begin position="21"/>
        <end position="46"/>
    </location>
</feature>
<feature type="domain" description="Antistasin-like 2" evidence="1">
    <location>
        <begin position="49"/>
        <end position="75"/>
    </location>
</feature>
<organism>
    <name type="scientific">Theromyzon tessulatum</name>
    <name type="common">Duck leech</name>
    <dbReference type="NCBI Taxonomy" id="13286"/>
    <lineage>
        <taxon>Eukaryota</taxon>
        <taxon>Metazoa</taxon>
        <taxon>Spiralia</taxon>
        <taxon>Lophotrochozoa</taxon>
        <taxon>Annelida</taxon>
        <taxon>Clitellata</taxon>
        <taxon>Hirudinea</taxon>
        <taxon>Rhynchobdellida</taxon>
        <taxon>Glossiphoniidae</taxon>
        <taxon>Theromyzon</taxon>
    </lineage>
</organism>
<reference key="1">
    <citation type="journal article" date="2000" name="J. Biol. Chem.">
        <title>Therostasin, a novel clotting factor Xa inhibitor from the rhynchobdellid leech, Theromyzon tessulatum.</title>
        <authorList>
            <person name="Chopin V."/>
            <person name="Salzet M."/>
            <person name="Baert J.-L."/>
            <person name="Vandenbulcke F."/>
            <person name="Sautiere P.-E."/>
            <person name="Kerkaert J.-P."/>
            <person name="Malecha J."/>
        </authorList>
    </citation>
    <scope>NUCLEOTIDE SEQUENCE [MRNA]</scope>
    <scope>PROTEIN SEQUENCE OF 20-101</scope>
    <scope>FUNCTION</scope>
    <scope>TISSUE SPECIFICITY</scope>
    <scope>MASS SPECTROMETRY</scope>
    <source>
        <tissue>Head</tissue>
    </source>
</reference>
<keyword id="KW-0903">Direct protein sequencing</keyword>
<keyword id="KW-0646">Protease inhibitor</keyword>
<keyword id="KW-0677">Repeat</keyword>
<keyword id="KW-0964">Secreted</keyword>
<keyword id="KW-0722">Serine protease inhibitor</keyword>
<keyword id="KW-0732">Signal</keyword>
<protein>
    <recommendedName>
        <fullName>Therostasin</fullName>
    </recommendedName>
</protein>
<dbReference type="EMBL" id="AF239803">
    <property type="protein sequence ID" value="AAF73958.1"/>
    <property type="molecule type" value="mRNA"/>
</dbReference>
<dbReference type="SMR" id="Q9NBW4"/>
<dbReference type="MEROPS" id="I15.003"/>
<dbReference type="GO" id="GO:0005576">
    <property type="term" value="C:extracellular region"/>
    <property type="evidence" value="ECO:0007669"/>
    <property type="project" value="UniProtKB-SubCell"/>
</dbReference>
<dbReference type="GO" id="GO:0004867">
    <property type="term" value="F:serine-type endopeptidase inhibitor activity"/>
    <property type="evidence" value="ECO:0007669"/>
    <property type="project" value="UniProtKB-KW"/>
</dbReference>
<dbReference type="GO" id="GO:0019229">
    <property type="term" value="P:regulation of vasoconstriction"/>
    <property type="evidence" value="ECO:0007669"/>
    <property type="project" value="InterPro"/>
</dbReference>
<dbReference type="Gene3D" id="2.10.22.10">
    <property type="entry name" value="Antistasin, domain 1"/>
    <property type="match status" value="1"/>
</dbReference>
<dbReference type="InterPro" id="IPR004094">
    <property type="entry name" value="Antistasin-like"/>
</dbReference>
<dbReference type="InterPro" id="IPR019764">
    <property type="entry name" value="Endothelin_toxin_CS"/>
</dbReference>
<dbReference type="InterPro" id="IPR011061">
    <property type="entry name" value="Hirudin/antistatin"/>
</dbReference>
<dbReference type="Pfam" id="PF02822">
    <property type="entry name" value="Antistasin"/>
    <property type="match status" value="1"/>
</dbReference>
<dbReference type="SUPFAM" id="SSF57262">
    <property type="entry name" value="Leech antihemostatic proteins"/>
    <property type="match status" value="1"/>
</dbReference>
<dbReference type="PROSITE" id="PS51252">
    <property type="entry name" value="ANTISTASIN"/>
    <property type="match status" value="2"/>
</dbReference>
<proteinExistence type="evidence at protein level"/>
<accession>Q9NBW4</accession>
<accession>P82355</accession>
<name>THST_THETS</name>
<sequence>MRGLAVLLLVACFCSVAFGDCENTECPRACPGEYEFDEDGCNTCLCKGCNDAQCRIYCPLGFTTDANGCESFCTCNTRETVCQNVVCSGKRVCNPRSGRCE</sequence>
<comment type="function">
    <text evidence="2">Potent inhibitor of factor Xa. It also inhibits trypsin in a weaker manner.</text>
</comment>
<comment type="subcellular location">
    <subcellularLocation>
        <location>Secreted</location>
    </subcellularLocation>
</comment>
<comment type="tissue specificity">
    <text evidence="2">Salivary glands.</text>
</comment>
<comment type="mass spectrometry"/>
<comment type="similarity">
    <text evidence="3">Belongs to the protease inhibitor I15 (antistasin) family.</text>
</comment>
<evidence type="ECO:0000255" key="1">
    <source>
        <dbReference type="PROSITE-ProRule" id="PRU00582"/>
    </source>
</evidence>
<evidence type="ECO:0000269" key="2">
    <source>
    </source>
</evidence>
<evidence type="ECO:0000305" key="3"/>